<feature type="chain" id="PRO_0000295896" description="Uncharacterized protein C5orf34 homolog">
    <location>
        <begin position="1"/>
        <end position="638"/>
    </location>
</feature>
<dbReference type="EMBL" id="BC114653">
    <property type="protein sequence ID" value="AAI14654.1"/>
    <property type="molecule type" value="mRNA"/>
</dbReference>
<dbReference type="RefSeq" id="NP_001076895.1">
    <property type="nucleotide sequence ID" value="NM_001083426.1"/>
</dbReference>
<dbReference type="RefSeq" id="XP_015314560.1">
    <property type="nucleotide sequence ID" value="XM_015459074.3"/>
</dbReference>
<dbReference type="RefSeq" id="XP_024837038.1">
    <property type="nucleotide sequence ID" value="XM_024981270.2"/>
</dbReference>
<dbReference type="FunCoup" id="A4FUB0">
    <property type="interactions" value="1628"/>
</dbReference>
<dbReference type="STRING" id="9913.ENSBTAP00000009815"/>
<dbReference type="PaxDb" id="9913-ENSBTAP00000009815"/>
<dbReference type="Ensembl" id="ENSBTAT00000009815.5">
    <property type="protein sequence ID" value="ENSBTAP00000009815.4"/>
    <property type="gene ID" value="ENSBTAG00000007461.6"/>
</dbReference>
<dbReference type="GeneID" id="514072"/>
<dbReference type="KEGG" id="bta:514072"/>
<dbReference type="CTD" id="514072"/>
<dbReference type="VEuPathDB" id="HostDB:ENSBTAG00000007461"/>
<dbReference type="VGNC" id="VGNC:52671">
    <property type="gene designation" value="C20H5orf34"/>
</dbReference>
<dbReference type="eggNOG" id="ENOG502QSYT">
    <property type="taxonomic scope" value="Eukaryota"/>
</dbReference>
<dbReference type="GeneTree" id="ENSGT00500000044987"/>
<dbReference type="HOGENOM" id="CLU_029198_0_0_1"/>
<dbReference type="InParanoid" id="A4FUB0"/>
<dbReference type="OMA" id="TAVISWC"/>
<dbReference type="OrthoDB" id="75908at2759"/>
<dbReference type="TreeFam" id="TF328443"/>
<dbReference type="Proteomes" id="UP000009136">
    <property type="component" value="Chromosome 20"/>
</dbReference>
<dbReference type="Bgee" id="ENSBTAG00000007461">
    <property type="expression patterns" value="Expressed in oocyte and 105 other cell types or tissues"/>
</dbReference>
<dbReference type="InterPro" id="IPR053901">
    <property type="entry name" value="C5orf34-like"/>
</dbReference>
<dbReference type="InterPro" id="IPR053899">
    <property type="entry name" value="C5orf34-like_2nd"/>
</dbReference>
<dbReference type="InterPro" id="IPR027865">
    <property type="entry name" value="C5orf34-like_C"/>
</dbReference>
<dbReference type="InterPro" id="IPR053900">
    <property type="entry name" value="C5orf34-like_dom"/>
</dbReference>
<dbReference type="InterPro" id="IPR027830">
    <property type="entry name" value="C5orf34-like_N"/>
</dbReference>
<dbReference type="PANTHER" id="PTHR34531:SF1">
    <property type="entry name" value="CHROMOSOME 5 OPEN READING FRAME 34"/>
    <property type="match status" value="1"/>
</dbReference>
<dbReference type="PANTHER" id="PTHR34531">
    <property type="entry name" value="ZGC:153352"/>
    <property type="match status" value="1"/>
</dbReference>
<dbReference type="Pfam" id="PF15025">
    <property type="entry name" value="C5orf34-like_N"/>
    <property type="match status" value="1"/>
</dbReference>
<dbReference type="Pfam" id="PF22833">
    <property type="entry name" value="C5orf34_2nd"/>
    <property type="match status" value="1"/>
</dbReference>
<dbReference type="Pfam" id="PF15016">
    <property type="entry name" value="C5orf34_C"/>
    <property type="match status" value="1"/>
</dbReference>
<dbReference type="Pfam" id="PF22834">
    <property type="entry name" value="Polo_box_4"/>
    <property type="match status" value="1"/>
</dbReference>
<keyword id="KW-1185">Reference proteome</keyword>
<protein>
    <recommendedName>
        <fullName>Uncharacterized protein C5orf34 homolog</fullName>
    </recommendedName>
</protein>
<reference key="1">
    <citation type="submission" date="2006-04" db="EMBL/GenBank/DDBJ databases">
        <authorList>
            <consortium name="NIH - Mammalian Gene Collection (MGC) project"/>
        </authorList>
    </citation>
    <scope>NUCLEOTIDE SEQUENCE [LARGE SCALE MRNA]</scope>
    <source>
        <strain>Hereford</strain>
        <tissue>Uterus</tissue>
    </source>
</reference>
<organism>
    <name type="scientific">Bos taurus</name>
    <name type="common">Bovine</name>
    <dbReference type="NCBI Taxonomy" id="9913"/>
    <lineage>
        <taxon>Eukaryota</taxon>
        <taxon>Metazoa</taxon>
        <taxon>Chordata</taxon>
        <taxon>Craniata</taxon>
        <taxon>Vertebrata</taxon>
        <taxon>Euteleostomi</taxon>
        <taxon>Mammalia</taxon>
        <taxon>Eutheria</taxon>
        <taxon>Laurasiatheria</taxon>
        <taxon>Artiodactyla</taxon>
        <taxon>Ruminantia</taxon>
        <taxon>Pecora</taxon>
        <taxon>Bovidae</taxon>
        <taxon>Bovinae</taxon>
        <taxon>Bos</taxon>
    </lineage>
</organism>
<name>CE034_BOVIN</name>
<accession>A4FUB0</accession>
<proteinExistence type="evidence at transcript level"/>
<sequence>MAAEVQMVLYEDDSVQVQYIDGSRLQLSPCGSEFLFEKAPPVSAHPLQQPERIRQRTHFVISAYREQLQRALDFRNSFATCPFLSESIIPSEMKTRILIDVSEVRWPSLDTGDGMTYMQSGTVRISSLDGHAYLCLPKSQHEFTVHFLCKVSQKPDSSIEVSEKNNKGKKDKQVEKAGKICTRGSLSGQRLKNKENELYHQIMKSEEPSEKSCVNGAKGREVLSSPHPKDTCIYTWVKQCWSVASCPEEWKYPLSLALHFHDKISSMSGIDADITQKRMLTSDVSEERGKEVSVLPRALLLSCPAPHLHRWNFSDSLSQKQFGEEEYSYHELVKVVWYKGVTYRLTHKHMNSIEIYPGDGSVFKSEGAYLGNYFTYYSIREESEEREEKTYAVNNLPPDRPGSPFSVCSLIKQATRILQHCAKMRLSLSHNYRVCCWKMVPGINDSSVLPLLLRESFVPGVGRFLAYSDDKVHAIFLDGITLTLNWNFGSFIEKRQVNRGLTLGWCKLTFPDGQNQLIQIQHPRPYERYVTTVISWCRRLTQISQQEIPIHPSSSVPEESWSVASELEKIQKFNLLLESSGVLNQTSNKKNKQSLDRCKPKSSETLLKEVNEKSVSVALKKTSEILQDIDNLLSNSKW</sequence>